<reference key="1">
    <citation type="journal article" date="1992" name="Virology">
        <title>The DNA sequence of equine herpesvirus-1.</title>
        <authorList>
            <person name="Telford E.A.R."/>
            <person name="Watson M.S."/>
            <person name="McBride K."/>
            <person name="Davison A.J."/>
        </authorList>
    </citation>
    <scope>NUCLEOTIDE SEQUENCE [LARGE SCALE GENOMIC DNA]</scope>
</reference>
<reference key="2">
    <citation type="journal article" date="2006" name="J. Virol.">
        <title>Characterization of a novel transferable CRM-1-independent nuclear export signal in a herpesvirus tegument protein that shuttles between the nucleus and cytoplasm.</title>
        <authorList>
            <person name="Verhagen J."/>
            <person name="Donnelly M."/>
            <person name="Elliott G."/>
        </authorList>
    </citation>
    <scope>SUBCELLULAR LOCATION</scope>
    <source>
        <strain>RacH</strain>
    </source>
</reference>
<sequence length="871" mass="96971">MDQHHGARGGAPIRRPRRSIESRSHPFRATGNTQRTYSTPRLSYRDGLSGRTASRDPQEQASNQDESSNPSTSNAQQSTSFWGYLRRVFSDDVPAQPQAPRPRADFAPPAGEESSSEEEEEEGPAQAPLDEEDQLMYADQYSVGDSSDENDEEEDPRLGSDYPTSAESSEYHDHGEMVAGAGAESESETDIDAEEEEEDDEDDEDDMEVIRDESYRLPRTWLDKSIRLMDEALAQSSELSKAITKSTRSLYDSQFAPGGRGYTQTATPSRRLVQLSRAGMYDSDKIVMTGDYMEVDDDPDSAYQSWVRAIRHPLAMNPSWEETISNHTNPSFSTDIDYDIDELIEKNLARTPPVFEGLLDSAEFFYKLPMLYTYATITQDEAYEERLAWSNTQALHGHEQSSWQALLVYYSRGGMYVSPTQEPRGIWRRALKQAMALQLKMCVLGLSDVVTKQNATHHHAAVTFLVDALLRTARNCYLASRLLVFAWERRRETGAKRPAEPLIALSGVTLLQPLPPEVSELLEQRTFDIGLRTPNSAVFRAFFGSLVYWAELRLALRDPASINCRYVGFHLQTSEIYLLARAHSASPGYTKEELVAMEAILTLATLMLEVALQWVHVACAQLLSENDTIKAFRRVSASIPHALAPLGSIRLHDAEFEVLSNPDVMVARDETALSQALFLGYFSVRTALTACMRDYSHEADGGSKETVTGVFLGVGLILQRLAGHLNFLLNCLAGAALYGGQKINIHSLTLPRYSLLADVMAPMLQRQSLVDFWRARDNMLEDLEITPRPGPPTQGKRVVVEMPLPSDDLPDMTPGASVNNGAGLGRMVDMAKQLQHYRETIIGEEATSSVGKRGLIRAGVGVAALRGRRRK</sequence>
<organismHost>
    <name type="scientific">Equus caballus</name>
    <name type="common">Horse</name>
    <dbReference type="NCBI Taxonomy" id="9796"/>
</organismHost>
<protein>
    <recommendedName>
        <fullName>Tegument protein UL47 homolog</fullName>
    </recommendedName>
    <alternativeName>
        <fullName>GP10</fullName>
    </alternativeName>
</protein>
<keyword id="KW-1035">Host cytoplasm</keyword>
<keyword id="KW-1048">Host nucleus</keyword>
<keyword id="KW-0426">Late protein</keyword>
<keyword id="KW-1185">Reference proteome</keyword>
<keyword id="KW-0804">Transcription</keyword>
<keyword id="KW-0805">Transcription regulation</keyword>
<keyword id="KW-0946">Virion</keyword>
<keyword id="KW-0920">Virion tegument</keyword>
<evidence type="ECO:0000250" key="1"/>
<evidence type="ECO:0000250" key="2">
    <source>
        <dbReference type="UniProtKB" id="P10231"/>
    </source>
</evidence>
<evidence type="ECO:0000255" key="3"/>
<evidence type="ECO:0000256" key="4">
    <source>
        <dbReference type="SAM" id="MobiDB-lite"/>
    </source>
</evidence>
<evidence type="ECO:0000305" key="5"/>
<proteinExistence type="inferred from homology"/>
<name>TEG5_EHV1B</name>
<organism>
    <name type="scientific">Equine herpesvirus 1 (strain Ab4p)</name>
    <name type="common">EHV-1</name>
    <name type="synonym">Equine abortion virus</name>
    <dbReference type="NCBI Taxonomy" id="31520"/>
    <lineage>
        <taxon>Viruses</taxon>
        <taxon>Duplodnaviria</taxon>
        <taxon>Heunggongvirae</taxon>
        <taxon>Peploviricota</taxon>
        <taxon>Herviviricetes</taxon>
        <taxon>Herpesvirales</taxon>
        <taxon>Orthoherpesviridae</taxon>
        <taxon>Alphaherpesvirinae</taxon>
        <taxon>Varicellovirus</taxon>
        <taxon>Varicellovirus equidalpha1</taxon>
        <taxon>Equid alphaherpesvirus 1</taxon>
    </lineage>
</organism>
<accession>P28929</accession>
<accession>Q6DLJ8</accession>
<feature type="chain" id="PRO_0000116077" description="Tegument protein UL47 homolog">
    <location>
        <begin position="1"/>
        <end position="871"/>
    </location>
</feature>
<feature type="region of interest" description="Disordered" evidence="4">
    <location>
        <begin position="1"/>
        <end position="212"/>
    </location>
</feature>
<feature type="short sequence motif" description="Nuclear localization signal" evidence="3">
    <location>
        <begin position="13"/>
        <end position="33"/>
    </location>
</feature>
<feature type="compositionally biased region" description="Polar residues" evidence="4">
    <location>
        <begin position="30"/>
        <end position="41"/>
    </location>
</feature>
<feature type="compositionally biased region" description="Polar residues" evidence="4">
    <location>
        <begin position="59"/>
        <end position="81"/>
    </location>
</feature>
<feature type="compositionally biased region" description="Acidic residues" evidence="4">
    <location>
        <begin position="114"/>
        <end position="134"/>
    </location>
</feature>
<feature type="compositionally biased region" description="Acidic residues" evidence="4">
    <location>
        <begin position="146"/>
        <end position="155"/>
    </location>
</feature>
<feature type="compositionally biased region" description="Acidic residues" evidence="4">
    <location>
        <begin position="185"/>
        <end position="207"/>
    </location>
</feature>
<gene>
    <name type="ordered locus">13</name>
</gene>
<comment type="function">
    <text evidence="2">Tegument protein that can bind to various RNA transcripts. Plays a role in the attenuation of selective viral and cellular mRNA degradation by modulating the activity of host shutoff RNase UL41/VHS. Also plays a role in the primary envelopment of virions in the perinuclear space, probably by interacting with two nuclear egress proteins UL31 and UL34.</text>
</comment>
<comment type="subunit">
    <text evidence="2">Interacts with US3 kinase. Interacts with UL31 and UL34; these interactions seem important for efficient virion nuclear egress. Interacts with UL41/VHS.</text>
</comment>
<comment type="subcellular location">
    <subcellularLocation>
        <location evidence="2">Virion tegument</location>
    </subcellularLocation>
    <subcellularLocation>
        <location evidence="2">Host nucleus</location>
    </subcellularLocation>
    <subcellularLocation>
        <location evidence="2">Host cytoplasm</location>
    </subcellularLocation>
    <text evidence="2">Major tegument protein of the virion. Undergoes nucleocytoplasmic shuttling during infection. Localizes to the major sites of transcription in the infected cell nucleus.</text>
</comment>
<comment type="domain">
    <text evidence="2">The nuclear export signal is CRM1-dependent.</text>
</comment>
<comment type="PTM">
    <text evidence="2">Phosphorylated by US3. This phosphorylation is required for proper nuclear localization.</text>
</comment>
<comment type="miscellaneous">
    <text evidence="1">Expressed in late in the infection.</text>
</comment>
<comment type="similarity">
    <text evidence="5">Belongs to the alphaherpesvirinae HHV-1 UL47 family.</text>
</comment>
<dbReference type="EMBL" id="AY665713">
    <property type="protein sequence ID" value="AAT67270.1"/>
    <property type="molecule type" value="Genomic_DNA"/>
</dbReference>
<dbReference type="PIR" id="E36796">
    <property type="entry name" value="TNBEA1"/>
</dbReference>
<dbReference type="KEGG" id="vg:1487516"/>
<dbReference type="Proteomes" id="UP000001189">
    <property type="component" value="Segment"/>
</dbReference>
<dbReference type="GO" id="GO:0030430">
    <property type="term" value="C:host cell cytoplasm"/>
    <property type="evidence" value="ECO:0007669"/>
    <property type="project" value="UniProtKB-SubCell"/>
</dbReference>
<dbReference type="GO" id="GO:0042025">
    <property type="term" value="C:host cell nucleus"/>
    <property type="evidence" value="ECO:0007669"/>
    <property type="project" value="UniProtKB-SubCell"/>
</dbReference>
<dbReference type="GO" id="GO:0019033">
    <property type="term" value="C:viral tegument"/>
    <property type="evidence" value="ECO:0007669"/>
    <property type="project" value="UniProtKB-SubCell"/>
</dbReference>
<dbReference type="GO" id="GO:0006355">
    <property type="term" value="P:regulation of DNA-templated transcription"/>
    <property type="evidence" value="ECO:0007669"/>
    <property type="project" value="InterPro"/>
</dbReference>
<dbReference type="InterPro" id="IPR005029">
    <property type="entry name" value="Herpes_UL47"/>
</dbReference>
<dbReference type="Pfam" id="PF03362">
    <property type="entry name" value="Herpes_UL47"/>
    <property type="match status" value="1"/>
</dbReference>